<sequence length="444" mass="49737">MTHSVPNIGFVSLGCPKNLVDSERILTELRSDGYNIIPTYENADLVIVNTCGFIDSAVQESLEAIGEALEANGKVLVTGCLGAKEDRIREVHPKVLEITGPHSYEAVMEHVHKYVPKPAYNPYINVVPSQGVKLTPKHYAYLKISEGCDHKCTFCIIPSLRGDLDSRPITQILDEAKRLADSGVKELLVVSQDTSAYSLDQSKETQNKTVFWNGIPIKNNLITLCQMLGTLGVWVRLHYVYPYPHVDDLIPLMAAGKILPYLDIPLQHASPKILKAMKRPGSVERVLERIKNWREICPELTLRSTFIVGFPGETEEDFQLLLDFLKEAQLDRVGCFKFSPVDGATATDMPDQVPEEVKEERFQRFMQLQQEISAARLQQKIGKTWKVIVDEIDEEGIIGRSMADAPEIDGVVYVDNVGQSAVRIGDIIDVRITRADEYDLWGTC</sequence>
<proteinExistence type="inferred from homology"/>
<feature type="chain" id="PRO_0000374688" description="Ribosomal protein uS12 methylthiotransferase RimO">
    <location>
        <begin position="1"/>
        <end position="444"/>
    </location>
</feature>
<feature type="domain" description="MTTase N-terminal" evidence="1">
    <location>
        <begin position="6"/>
        <end position="116"/>
    </location>
</feature>
<feature type="domain" description="Radical SAM core" evidence="2">
    <location>
        <begin position="134"/>
        <end position="375"/>
    </location>
</feature>
<feature type="domain" description="TRAM" evidence="1">
    <location>
        <begin position="378"/>
        <end position="444"/>
    </location>
</feature>
<feature type="binding site" evidence="1">
    <location>
        <position position="15"/>
    </location>
    <ligand>
        <name>[4Fe-4S] cluster</name>
        <dbReference type="ChEBI" id="CHEBI:49883"/>
        <label>1</label>
    </ligand>
</feature>
<feature type="binding site" evidence="1">
    <location>
        <position position="51"/>
    </location>
    <ligand>
        <name>[4Fe-4S] cluster</name>
        <dbReference type="ChEBI" id="CHEBI:49883"/>
        <label>1</label>
    </ligand>
</feature>
<feature type="binding site" evidence="1">
    <location>
        <position position="80"/>
    </location>
    <ligand>
        <name>[4Fe-4S] cluster</name>
        <dbReference type="ChEBI" id="CHEBI:49883"/>
        <label>1</label>
    </ligand>
</feature>
<feature type="binding site" evidence="1">
    <location>
        <position position="148"/>
    </location>
    <ligand>
        <name>[4Fe-4S] cluster</name>
        <dbReference type="ChEBI" id="CHEBI:49883"/>
        <label>2</label>
        <note>4Fe-4S-S-AdoMet</note>
    </ligand>
</feature>
<feature type="binding site" evidence="1">
    <location>
        <position position="152"/>
    </location>
    <ligand>
        <name>[4Fe-4S] cluster</name>
        <dbReference type="ChEBI" id="CHEBI:49883"/>
        <label>2</label>
        <note>4Fe-4S-S-AdoMet</note>
    </ligand>
</feature>
<feature type="binding site" evidence="1">
    <location>
        <position position="155"/>
    </location>
    <ligand>
        <name>[4Fe-4S] cluster</name>
        <dbReference type="ChEBI" id="CHEBI:49883"/>
        <label>2</label>
        <note>4Fe-4S-S-AdoMet</note>
    </ligand>
</feature>
<gene>
    <name evidence="1" type="primary">rimO</name>
    <name type="ordered locus">Asuc_0405</name>
</gene>
<organism>
    <name type="scientific">Actinobacillus succinogenes (strain ATCC 55618 / DSM 22257 / CCUG 43843 / 130Z)</name>
    <dbReference type="NCBI Taxonomy" id="339671"/>
    <lineage>
        <taxon>Bacteria</taxon>
        <taxon>Pseudomonadati</taxon>
        <taxon>Pseudomonadota</taxon>
        <taxon>Gammaproteobacteria</taxon>
        <taxon>Pasteurellales</taxon>
        <taxon>Pasteurellaceae</taxon>
        <taxon>Actinobacillus</taxon>
    </lineage>
</organism>
<keyword id="KW-0004">4Fe-4S</keyword>
<keyword id="KW-0963">Cytoplasm</keyword>
<keyword id="KW-0408">Iron</keyword>
<keyword id="KW-0411">Iron-sulfur</keyword>
<keyword id="KW-0479">Metal-binding</keyword>
<keyword id="KW-1185">Reference proteome</keyword>
<keyword id="KW-0949">S-adenosyl-L-methionine</keyword>
<keyword id="KW-0808">Transferase</keyword>
<comment type="function">
    <text evidence="1">Catalyzes the methylthiolation of an aspartic acid residue of ribosomal protein uS12.</text>
</comment>
<comment type="catalytic activity">
    <reaction evidence="1">
        <text>L-aspartate(89)-[ribosomal protein uS12]-hydrogen + (sulfur carrier)-SH + AH2 + 2 S-adenosyl-L-methionine = 3-methylsulfanyl-L-aspartate(89)-[ribosomal protein uS12]-hydrogen + (sulfur carrier)-H + 5'-deoxyadenosine + L-methionine + A + S-adenosyl-L-homocysteine + 2 H(+)</text>
        <dbReference type="Rhea" id="RHEA:37087"/>
        <dbReference type="Rhea" id="RHEA-COMP:10460"/>
        <dbReference type="Rhea" id="RHEA-COMP:10461"/>
        <dbReference type="Rhea" id="RHEA-COMP:14737"/>
        <dbReference type="Rhea" id="RHEA-COMP:14739"/>
        <dbReference type="ChEBI" id="CHEBI:13193"/>
        <dbReference type="ChEBI" id="CHEBI:15378"/>
        <dbReference type="ChEBI" id="CHEBI:17319"/>
        <dbReference type="ChEBI" id="CHEBI:17499"/>
        <dbReference type="ChEBI" id="CHEBI:29917"/>
        <dbReference type="ChEBI" id="CHEBI:29961"/>
        <dbReference type="ChEBI" id="CHEBI:57844"/>
        <dbReference type="ChEBI" id="CHEBI:57856"/>
        <dbReference type="ChEBI" id="CHEBI:59789"/>
        <dbReference type="ChEBI" id="CHEBI:64428"/>
        <dbReference type="ChEBI" id="CHEBI:73599"/>
        <dbReference type="EC" id="2.8.4.4"/>
    </reaction>
</comment>
<comment type="cofactor">
    <cofactor evidence="1">
        <name>[4Fe-4S] cluster</name>
        <dbReference type="ChEBI" id="CHEBI:49883"/>
    </cofactor>
    <text evidence="1">Binds 2 [4Fe-4S] clusters. One cluster is coordinated with 3 cysteines and an exchangeable S-adenosyl-L-methionine.</text>
</comment>
<comment type="subcellular location">
    <subcellularLocation>
        <location evidence="1">Cytoplasm</location>
    </subcellularLocation>
</comment>
<comment type="similarity">
    <text evidence="1">Belongs to the methylthiotransferase family. RimO subfamily.</text>
</comment>
<name>RIMO_ACTSZ</name>
<accession>A6VLD6</accession>
<dbReference type="EC" id="2.8.4.4" evidence="1"/>
<dbReference type="EMBL" id="CP000746">
    <property type="protein sequence ID" value="ABR73783.1"/>
    <property type="molecule type" value="Genomic_DNA"/>
</dbReference>
<dbReference type="RefSeq" id="WP_012072168.1">
    <property type="nucleotide sequence ID" value="NC_009655.1"/>
</dbReference>
<dbReference type="SMR" id="A6VLD6"/>
<dbReference type="STRING" id="339671.Asuc_0405"/>
<dbReference type="KEGG" id="asu:Asuc_0405"/>
<dbReference type="eggNOG" id="COG0621">
    <property type="taxonomic scope" value="Bacteria"/>
</dbReference>
<dbReference type="HOGENOM" id="CLU_018697_0_0_6"/>
<dbReference type="OrthoDB" id="9805215at2"/>
<dbReference type="Proteomes" id="UP000001114">
    <property type="component" value="Chromosome"/>
</dbReference>
<dbReference type="GO" id="GO:0005829">
    <property type="term" value="C:cytosol"/>
    <property type="evidence" value="ECO:0007669"/>
    <property type="project" value="TreeGrafter"/>
</dbReference>
<dbReference type="GO" id="GO:0051539">
    <property type="term" value="F:4 iron, 4 sulfur cluster binding"/>
    <property type="evidence" value="ECO:0007669"/>
    <property type="project" value="UniProtKB-UniRule"/>
</dbReference>
<dbReference type="GO" id="GO:0035599">
    <property type="term" value="F:aspartic acid methylthiotransferase activity"/>
    <property type="evidence" value="ECO:0007669"/>
    <property type="project" value="TreeGrafter"/>
</dbReference>
<dbReference type="GO" id="GO:0046872">
    <property type="term" value="F:metal ion binding"/>
    <property type="evidence" value="ECO:0007669"/>
    <property type="project" value="UniProtKB-KW"/>
</dbReference>
<dbReference type="GO" id="GO:0103039">
    <property type="term" value="F:protein methylthiotransferase activity"/>
    <property type="evidence" value="ECO:0007669"/>
    <property type="project" value="UniProtKB-EC"/>
</dbReference>
<dbReference type="GO" id="GO:0006400">
    <property type="term" value="P:tRNA modification"/>
    <property type="evidence" value="ECO:0007669"/>
    <property type="project" value="InterPro"/>
</dbReference>
<dbReference type="CDD" id="cd01335">
    <property type="entry name" value="Radical_SAM"/>
    <property type="match status" value="1"/>
</dbReference>
<dbReference type="FunFam" id="2.40.50.140:FF:000060">
    <property type="entry name" value="Ribosomal protein S12 methylthiotransferase RimO"/>
    <property type="match status" value="1"/>
</dbReference>
<dbReference type="FunFam" id="3.40.50.12160:FF:000002">
    <property type="entry name" value="Ribosomal protein S12 methylthiotransferase RimO"/>
    <property type="match status" value="1"/>
</dbReference>
<dbReference type="FunFam" id="3.80.30.20:FF:000001">
    <property type="entry name" value="tRNA-2-methylthio-N(6)-dimethylallyladenosine synthase 2"/>
    <property type="match status" value="1"/>
</dbReference>
<dbReference type="Gene3D" id="3.40.50.12160">
    <property type="entry name" value="Methylthiotransferase, N-terminal domain"/>
    <property type="match status" value="1"/>
</dbReference>
<dbReference type="Gene3D" id="2.40.50.140">
    <property type="entry name" value="Nucleic acid-binding proteins"/>
    <property type="match status" value="1"/>
</dbReference>
<dbReference type="Gene3D" id="3.80.30.20">
    <property type="entry name" value="tm_1862 like domain"/>
    <property type="match status" value="1"/>
</dbReference>
<dbReference type="HAMAP" id="MF_01865">
    <property type="entry name" value="MTTase_RimO"/>
    <property type="match status" value="1"/>
</dbReference>
<dbReference type="InterPro" id="IPR006638">
    <property type="entry name" value="Elp3/MiaA/NifB-like_rSAM"/>
</dbReference>
<dbReference type="InterPro" id="IPR005839">
    <property type="entry name" value="Methylthiotransferase"/>
</dbReference>
<dbReference type="InterPro" id="IPR020612">
    <property type="entry name" value="Methylthiotransferase_CS"/>
</dbReference>
<dbReference type="InterPro" id="IPR013848">
    <property type="entry name" value="Methylthiotransferase_N"/>
</dbReference>
<dbReference type="InterPro" id="IPR038135">
    <property type="entry name" value="Methylthiotransferase_N_sf"/>
</dbReference>
<dbReference type="InterPro" id="IPR012340">
    <property type="entry name" value="NA-bd_OB-fold"/>
</dbReference>
<dbReference type="InterPro" id="IPR005840">
    <property type="entry name" value="Ribosomal_uS12_MeSTrfase_RimO"/>
</dbReference>
<dbReference type="InterPro" id="IPR007197">
    <property type="entry name" value="rSAM"/>
</dbReference>
<dbReference type="InterPro" id="IPR023404">
    <property type="entry name" value="rSAM_horseshoe"/>
</dbReference>
<dbReference type="InterPro" id="IPR002792">
    <property type="entry name" value="TRAM_dom"/>
</dbReference>
<dbReference type="NCBIfam" id="TIGR01125">
    <property type="entry name" value="30S ribosomal protein S12 methylthiotransferase RimO"/>
    <property type="match status" value="1"/>
</dbReference>
<dbReference type="NCBIfam" id="TIGR00089">
    <property type="entry name" value="MiaB/RimO family radical SAM methylthiotransferase"/>
    <property type="match status" value="1"/>
</dbReference>
<dbReference type="PANTHER" id="PTHR43837">
    <property type="entry name" value="RIBOSOMAL PROTEIN S12 METHYLTHIOTRANSFERASE RIMO"/>
    <property type="match status" value="1"/>
</dbReference>
<dbReference type="PANTHER" id="PTHR43837:SF1">
    <property type="entry name" value="RIBOSOMAL PROTEIN US12 METHYLTHIOTRANSFERASE RIMO"/>
    <property type="match status" value="1"/>
</dbReference>
<dbReference type="Pfam" id="PF04055">
    <property type="entry name" value="Radical_SAM"/>
    <property type="match status" value="1"/>
</dbReference>
<dbReference type="Pfam" id="PF18693">
    <property type="entry name" value="TRAM_2"/>
    <property type="match status" value="1"/>
</dbReference>
<dbReference type="Pfam" id="PF00919">
    <property type="entry name" value="UPF0004"/>
    <property type="match status" value="1"/>
</dbReference>
<dbReference type="SFLD" id="SFLDG01082">
    <property type="entry name" value="B12-binding_domain_containing"/>
    <property type="match status" value="1"/>
</dbReference>
<dbReference type="SFLD" id="SFLDS00029">
    <property type="entry name" value="Radical_SAM"/>
    <property type="match status" value="1"/>
</dbReference>
<dbReference type="SFLD" id="SFLDF00274">
    <property type="entry name" value="ribosomal_protein_S12_methylth"/>
    <property type="match status" value="1"/>
</dbReference>
<dbReference type="SMART" id="SM00729">
    <property type="entry name" value="Elp3"/>
    <property type="match status" value="1"/>
</dbReference>
<dbReference type="SUPFAM" id="SSF102114">
    <property type="entry name" value="Radical SAM enzymes"/>
    <property type="match status" value="1"/>
</dbReference>
<dbReference type="PROSITE" id="PS51449">
    <property type="entry name" value="MTTASE_N"/>
    <property type="match status" value="1"/>
</dbReference>
<dbReference type="PROSITE" id="PS01278">
    <property type="entry name" value="MTTASE_RADICAL"/>
    <property type="match status" value="1"/>
</dbReference>
<dbReference type="PROSITE" id="PS51918">
    <property type="entry name" value="RADICAL_SAM"/>
    <property type="match status" value="1"/>
</dbReference>
<dbReference type="PROSITE" id="PS50926">
    <property type="entry name" value="TRAM"/>
    <property type="match status" value="1"/>
</dbReference>
<reference key="1">
    <citation type="journal article" date="2010" name="BMC Genomics">
        <title>A genomic perspective on the potential of Actinobacillus succinogenes for industrial succinate production.</title>
        <authorList>
            <person name="McKinlay J.B."/>
            <person name="Laivenieks M."/>
            <person name="Schindler B.D."/>
            <person name="McKinlay A.A."/>
            <person name="Siddaramappa S."/>
            <person name="Challacombe J.F."/>
            <person name="Lowry S.R."/>
            <person name="Clum A."/>
            <person name="Lapidus A.L."/>
            <person name="Burkhart K.B."/>
            <person name="Harkins V."/>
            <person name="Vieille C."/>
        </authorList>
    </citation>
    <scope>NUCLEOTIDE SEQUENCE [LARGE SCALE GENOMIC DNA]</scope>
    <source>
        <strain>ATCC 55618 / DSM 22257 / CCUG 43843 / 130Z</strain>
    </source>
</reference>
<evidence type="ECO:0000255" key="1">
    <source>
        <dbReference type="HAMAP-Rule" id="MF_01865"/>
    </source>
</evidence>
<evidence type="ECO:0000255" key="2">
    <source>
        <dbReference type="PROSITE-ProRule" id="PRU01266"/>
    </source>
</evidence>
<protein>
    <recommendedName>
        <fullName evidence="1">Ribosomal protein uS12 methylthiotransferase RimO</fullName>
        <shortName evidence="1">uS12 MTTase</shortName>
        <shortName evidence="1">uS12 methylthiotransferase</shortName>
        <ecNumber evidence="1">2.8.4.4</ecNumber>
    </recommendedName>
    <alternativeName>
        <fullName evidence="1">Ribosomal protein uS12 (aspartate-C(3))-methylthiotransferase</fullName>
    </alternativeName>
    <alternativeName>
        <fullName evidence="1">Ribosome maturation factor RimO</fullName>
    </alternativeName>
</protein>